<reference key="1">
    <citation type="submission" date="2007-03" db="EMBL/GenBank/DDBJ databases">
        <title>Sequencing analysis of Draba nemoroza chloroplast DNA.</title>
        <authorList>
            <person name="Hosouchi T."/>
            <person name="Tsuruoka H."/>
            <person name="Kotani H."/>
        </authorList>
    </citation>
    <scope>NUCLEOTIDE SEQUENCE [LARGE SCALE GENOMIC DNA]</scope>
</reference>
<evidence type="ECO:0000255" key="1">
    <source>
        <dbReference type="HAMAP-Rule" id="MF_00458"/>
    </source>
</evidence>
<keyword id="KW-0004">4Fe-4S</keyword>
<keyword id="KW-0148">Chlorophyll</keyword>
<keyword id="KW-0150">Chloroplast</keyword>
<keyword id="KW-0157">Chromophore</keyword>
<keyword id="KW-0249">Electron transport</keyword>
<keyword id="KW-0408">Iron</keyword>
<keyword id="KW-0411">Iron-sulfur</keyword>
<keyword id="KW-0460">Magnesium</keyword>
<keyword id="KW-0472">Membrane</keyword>
<keyword id="KW-0479">Metal-binding</keyword>
<keyword id="KW-0560">Oxidoreductase</keyword>
<keyword id="KW-0602">Photosynthesis</keyword>
<keyword id="KW-0603">Photosystem I</keyword>
<keyword id="KW-0934">Plastid</keyword>
<keyword id="KW-0793">Thylakoid</keyword>
<keyword id="KW-0812">Transmembrane</keyword>
<keyword id="KW-1133">Transmembrane helix</keyword>
<keyword id="KW-0813">Transport</keyword>
<dbReference type="EC" id="1.97.1.12" evidence="1"/>
<dbReference type="EMBL" id="AP009373">
    <property type="protein sequence ID" value="BAF50374.1"/>
    <property type="molecule type" value="Genomic_DNA"/>
</dbReference>
<dbReference type="RefSeq" id="YP_001123550.1">
    <property type="nucleotide sequence ID" value="NC_009272.1"/>
</dbReference>
<dbReference type="SMR" id="A4QL19"/>
<dbReference type="GeneID" id="4964779"/>
<dbReference type="GO" id="GO:0009535">
    <property type="term" value="C:chloroplast thylakoid membrane"/>
    <property type="evidence" value="ECO:0007669"/>
    <property type="project" value="UniProtKB-SubCell"/>
</dbReference>
<dbReference type="GO" id="GO:0009522">
    <property type="term" value="C:photosystem I"/>
    <property type="evidence" value="ECO:0007669"/>
    <property type="project" value="UniProtKB-KW"/>
</dbReference>
<dbReference type="GO" id="GO:0051539">
    <property type="term" value="F:4 iron, 4 sulfur cluster binding"/>
    <property type="evidence" value="ECO:0007669"/>
    <property type="project" value="UniProtKB-KW"/>
</dbReference>
<dbReference type="GO" id="GO:0016168">
    <property type="term" value="F:chlorophyll binding"/>
    <property type="evidence" value="ECO:0007669"/>
    <property type="project" value="UniProtKB-KW"/>
</dbReference>
<dbReference type="GO" id="GO:0009055">
    <property type="term" value="F:electron transfer activity"/>
    <property type="evidence" value="ECO:0007669"/>
    <property type="project" value="UniProtKB-UniRule"/>
</dbReference>
<dbReference type="GO" id="GO:0000287">
    <property type="term" value="F:magnesium ion binding"/>
    <property type="evidence" value="ECO:0007669"/>
    <property type="project" value="UniProtKB-UniRule"/>
</dbReference>
<dbReference type="GO" id="GO:0016491">
    <property type="term" value="F:oxidoreductase activity"/>
    <property type="evidence" value="ECO:0007669"/>
    <property type="project" value="UniProtKB-KW"/>
</dbReference>
<dbReference type="GO" id="GO:0015979">
    <property type="term" value="P:photosynthesis"/>
    <property type="evidence" value="ECO:0007669"/>
    <property type="project" value="UniProtKB-UniRule"/>
</dbReference>
<dbReference type="FunFam" id="1.20.1130.10:FF:000001">
    <property type="entry name" value="Photosystem I P700 chlorophyll a apoprotein A2"/>
    <property type="match status" value="1"/>
</dbReference>
<dbReference type="Gene3D" id="1.20.1130.10">
    <property type="entry name" value="Photosystem I PsaA/PsaB"/>
    <property type="match status" value="1"/>
</dbReference>
<dbReference type="HAMAP" id="MF_00458">
    <property type="entry name" value="PSI_PsaA"/>
    <property type="match status" value="1"/>
</dbReference>
<dbReference type="InterPro" id="IPR006243">
    <property type="entry name" value="PSI_PsaA"/>
</dbReference>
<dbReference type="InterPro" id="IPR001280">
    <property type="entry name" value="PSI_PsaA/B"/>
</dbReference>
<dbReference type="InterPro" id="IPR020586">
    <property type="entry name" value="PSI_PsaA/B_CS"/>
</dbReference>
<dbReference type="InterPro" id="IPR036408">
    <property type="entry name" value="PSI_PsaA/B_sf"/>
</dbReference>
<dbReference type="NCBIfam" id="TIGR01335">
    <property type="entry name" value="psaA"/>
    <property type="match status" value="1"/>
</dbReference>
<dbReference type="PANTHER" id="PTHR30128">
    <property type="entry name" value="OUTER MEMBRANE PROTEIN, OMPA-RELATED"/>
    <property type="match status" value="1"/>
</dbReference>
<dbReference type="PANTHER" id="PTHR30128:SF19">
    <property type="entry name" value="PHOTOSYSTEM I P700 CHLOROPHYLL A APOPROTEIN A1-RELATED"/>
    <property type="match status" value="1"/>
</dbReference>
<dbReference type="Pfam" id="PF00223">
    <property type="entry name" value="PsaA_PsaB"/>
    <property type="match status" value="1"/>
</dbReference>
<dbReference type="PIRSF" id="PIRSF002905">
    <property type="entry name" value="PSI_A"/>
    <property type="match status" value="1"/>
</dbReference>
<dbReference type="PRINTS" id="PR00257">
    <property type="entry name" value="PHOTSYSPSAAB"/>
</dbReference>
<dbReference type="SUPFAM" id="SSF81558">
    <property type="entry name" value="Photosystem I subunits PsaA/PsaB"/>
    <property type="match status" value="1"/>
</dbReference>
<dbReference type="PROSITE" id="PS00419">
    <property type="entry name" value="PHOTOSYSTEM_I_PSAAB"/>
    <property type="match status" value="1"/>
</dbReference>
<geneLocation type="chloroplast"/>
<sequence length="750" mass="83187">MIIRSPEPEVKILVDRDPIKTSFEEWAKPGHFSRTIAKGPDTTTWIWNLHADAHDFDSHTSDLEEISRKVFSAHFGQLSIIFLWLSGMYFHGARFSNYEAWLSDPTHIGPSAQVVWPIVGQEILNGDVGGGFRGIQITSGFFQIWRASGITSELQLYCTAIGALVFAALMLFAGWFHYHKAAPKLAWFQDVESMLNHHLAGLLGLGSLSWAGHQVHVSLPINQFLNAGVDPKEIPLPHEFILNRDLLAQLYPSFAEGATPFFTLNWSKYSEFLTFRGGLDPVTGGLWLTDIAHHHLAIAILFLIAGHMYRTNWGIGHGLKDILEAHKGPFTGQGHKGLYEILTTSWHAQLSLNLAMLGSLTIVVAHHMYAMPPYPYLATDYATQLSLFTHHMWIGGFLIVGAAAHAAIFMVRDYDPTNRYNDLLDRVLRHRDAIISHLNWVCIFLGFHSFGLYIHNDTMSALGRPQDMFSDTAIQLQPVFAQWIQNTHALAPGVTAPGETASTSLTWGGGELVAVGGKVALLPIPLGTADFLVHHIHAFTIHVTVLILLKGVLFARSSRLIPDKANLGFRFPCDGPGRGGTCQVSAWDHVFLGLFWMYNAISVVIFHFSWKMQSDVWGSISDQGVVTHITGGNFAQSSITINGWLRDFLWAQASQVIQSYGSSLSAYGLFFLGAHFVWAFSLMFLFSGRGYWQELIESIVWAHNKLKVAPATQPRALSIVQGRAVGVTHYLLGGIATTWAFFLARIIAVG</sequence>
<protein>
    <recommendedName>
        <fullName evidence="1">Photosystem I P700 chlorophyll a apoprotein A1</fullName>
        <ecNumber evidence="1">1.97.1.12</ecNumber>
    </recommendedName>
    <alternativeName>
        <fullName evidence="1">PSI-A</fullName>
    </alternativeName>
    <alternativeName>
        <fullName evidence="1">PsaA</fullName>
    </alternativeName>
</protein>
<proteinExistence type="inferred from homology"/>
<comment type="function">
    <text>PsaA and PsaB bind P700, the primary electron donor of photosystem I (PSI), as well as the electron acceptors A0, A1 and FX. PSI is a plastocyanin-ferredoxin oxidoreductase, converting photonic excitation into a charge separation, which transfers an electron from the donor P700 chlorophyll pair to the spectroscopically characterized acceptors A0, A1, FX, FA and FB in turn. Oxidized P700 is reduced on the lumenal side of the thylakoid membrane by plastocyanin.</text>
</comment>
<comment type="catalytic activity">
    <reaction evidence="1">
        <text>reduced [plastocyanin] + hnu + oxidized [2Fe-2S]-[ferredoxin] = oxidized [plastocyanin] + reduced [2Fe-2S]-[ferredoxin]</text>
        <dbReference type="Rhea" id="RHEA:30407"/>
        <dbReference type="Rhea" id="RHEA-COMP:10000"/>
        <dbReference type="Rhea" id="RHEA-COMP:10001"/>
        <dbReference type="Rhea" id="RHEA-COMP:10039"/>
        <dbReference type="Rhea" id="RHEA-COMP:10040"/>
        <dbReference type="ChEBI" id="CHEBI:29036"/>
        <dbReference type="ChEBI" id="CHEBI:30212"/>
        <dbReference type="ChEBI" id="CHEBI:33737"/>
        <dbReference type="ChEBI" id="CHEBI:33738"/>
        <dbReference type="ChEBI" id="CHEBI:49552"/>
        <dbReference type="EC" id="1.97.1.12"/>
    </reaction>
</comment>
<comment type="cofactor">
    <text evidence="1">P700 is a chlorophyll a/chlorophyll a' dimer, A0 is one or more chlorophyll a, A1 is one or both phylloquinones and FX is a shared 4Fe-4S iron-sulfur center.</text>
</comment>
<comment type="subunit">
    <text evidence="1">The PsaA/B heterodimer binds the P700 chlorophyll special pair and subsequent electron acceptors. PSI consists of a core antenna complex that captures photons, and an electron transfer chain that converts photonic excitation into a charge separation. The eukaryotic PSI reaction center is composed of at least 11 subunits.</text>
</comment>
<comment type="subcellular location">
    <subcellularLocation>
        <location evidence="1">Plastid</location>
        <location evidence="1">Chloroplast thylakoid membrane</location>
        <topology evidence="1">Multi-pass membrane protein</topology>
    </subcellularLocation>
</comment>
<comment type="similarity">
    <text evidence="1">Belongs to the PsaA/PsaB family.</text>
</comment>
<feature type="chain" id="PRO_0000294221" description="Photosystem I P700 chlorophyll a apoprotein A1">
    <location>
        <begin position="1"/>
        <end position="750"/>
    </location>
</feature>
<feature type="transmembrane region" description="Helical; Name=I" evidence="1">
    <location>
        <begin position="70"/>
        <end position="93"/>
    </location>
</feature>
<feature type="transmembrane region" description="Helical; Name=II" evidence="1">
    <location>
        <begin position="156"/>
        <end position="179"/>
    </location>
</feature>
<feature type="transmembrane region" description="Helical; Name=III" evidence="1">
    <location>
        <begin position="195"/>
        <end position="219"/>
    </location>
</feature>
<feature type="transmembrane region" description="Helical; Name=IV" evidence="1">
    <location>
        <begin position="291"/>
        <end position="309"/>
    </location>
</feature>
<feature type="transmembrane region" description="Helical; Name=V" evidence="1">
    <location>
        <begin position="346"/>
        <end position="369"/>
    </location>
</feature>
<feature type="transmembrane region" description="Helical; Name=VI" evidence="1">
    <location>
        <begin position="385"/>
        <end position="411"/>
    </location>
</feature>
<feature type="transmembrane region" description="Helical; Name=VII" evidence="1">
    <location>
        <begin position="433"/>
        <end position="455"/>
    </location>
</feature>
<feature type="transmembrane region" description="Helical; Name=VIII" evidence="1">
    <location>
        <begin position="531"/>
        <end position="549"/>
    </location>
</feature>
<feature type="transmembrane region" description="Helical; Name=IX" evidence="1">
    <location>
        <begin position="589"/>
        <end position="610"/>
    </location>
</feature>
<feature type="transmembrane region" description="Helical; Name=X" evidence="1">
    <location>
        <begin position="664"/>
        <end position="686"/>
    </location>
</feature>
<feature type="transmembrane region" description="Helical; Name=XI" evidence="1">
    <location>
        <begin position="724"/>
        <end position="744"/>
    </location>
</feature>
<feature type="binding site" evidence="1">
    <location>
        <position position="573"/>
    </location>
    <ligand>
        <name>[4Fe-4S] cluster</name>
        <dbReference type="ChEBI" id="CHEBI:49883"/>
        <note>ligand shared between dimeric partners</note>
    </ligand>
</feature>
<feature type="binding site" evidence="1">
    <location>
        <position position="582"/>
    </location>
    <ligand>
        <name>[4Fe-4S] cluster</name>
        <dbReference type="ChEBI" id="CHEBI:49883"/>
        <note>ligand shared between dimeric partners</note>
    </ligand>
</feature>
<feature type="binding site" description="axial binding residue" evidence="1">
    <location>
        <position position="675"/>
    </location>
    <ligand>
        <name>chlorophyll a'</name>
        <dbReference type="ChEBI" id="CHEBI:189419"/>
        <label>A1</label>
    </ligand>
    <ligandPart>
        <name>Mg</name>
        <dbReference type="ChEBI" id="CHEBI:25107"/>
    </ligandPart>
</feature>
<feature type="binding site" description="axial binding residue" evidence="1">
    <location>
        <position position="683"/>
    </location>
    <ligand>
        <name>chlorophyll a</name>
        <dbReference type="ChEBI" id="CHEBI:58416"/>
        <label>A3</label>
    </ligand>
    <ligandPart>
        <name>Mg</name>
        <dbReference type="ChEBI" id="CHEBI:25107"/>
    </ligandPart>
</feature>
<feature type="binding site" evidence="1">
    <location>
        <position position="691"/>
    </location>
    <ligand>
        <name>chlorophyll a</name>
        <dbReference type="ChEBI" id="CHEBI:58416"/>
        <label>A3</label>
    </ligand>
</feature>
<feature type="binding site" evidence="1">
    <location>
        <position position="692"/>
    </location>
    <ligand>
        <name>phylloquinone</name>
        <dbReference type="ChEBI" id="CHEBI:18067"/>
        <label>A</label>
    </ligand>
</feature>
<name>PSAA_DRANE</name>
<gene>
    <name evidence="1" type="primary">psaA</name>
</gene>
<organism>
    <name type="scientific">Draba nemorosa</name>
    <name type="common">Woodland whitlowgrass</name>
    <dbReference type="NCBI Taxonomy" id="171822"/>
    <lineage>
        <taxon>Eukaryota</taxon>
        <taxon>Viridiplantae</taxon>
        <taxon>Streptophyta</taxon>
        <taxon>Embryophyta</taxon>
        <taxon>Tracheophyta</taxon>
        <taxon>Spermatophyta</taxon>
        <taxon>Magnoliopsida</taxon>
        <taxon>eudicotyledons</taxon>
        <taxon>Gunneridae</taxon>
        <taxon>Pentapetalae</taxon>
        <taxon>rosids</taxon>
        <taxon>malvids</taxon>
        <taxon>Brassicales</taxon>
        <taxon>Brassicaceae</taxon>
        <taxon>Arabideae</taxon>
        <taxon>Draba</taxon>
    </lineage>
</organism>
<accession>A4QL19</accession>